<protein>
    <recommendedName>
        <fullName evidence="1">Photosystem II reaction center protein Psb30</fullName>
    </recommendedName>
    <alternativeName>
        <fullName evidence="1">Photosystem II reaction center protein Ycf12</fullName>
    </alternativeName>
</protein>
<sequence>MELFAALNLEPIFQLTFVALIMLAGPFVIFLLAFRGGDL</sequence>
<dbReference type="EMBL" id="AP009552">
    <property type="protein sequence ID" value="BAG00080.1"/>
    <property type="status" value="ALT_INIT"/>
    <property type="molecule type" value="Genomic_DNA"/>
</dbReference>
<dbReference type="RefSeq" id="WP_002736367.1">
    <property type="nucleotide sequence ID" value="NC_010296.1"/>
</dbReference>
<dbReference type="SMR" id="B0JM63"/>
<dbReference type="STRING" id="449447.MAE_02580"/>
<dbReference type="PaxDb" id="449447-MAE_02580"/>
<dbReference type="EnsemblBacteria" id="BAG00080">
    <property type="protein sequence ID" value="BAG00080"/>
    <property type="gene ID" value="MAE_02580"/>
</dbReference>
<dbReference type="GeneID" id="66709355"/>
<dbReference type="KEGG" id="mar:MAE_02580"/>
<dbReference type="PATRIC" id="fig|449447.4.peg.239"/>
<dbReference type="HOGENOM" id="CLU_196761_1_0_3"/>
<dbReference type="BioCyc" id="MAER449447:MAE_RS01165-MONOMER"/>
<dbReference type="Proteomes" id="UP000001510">
    <property type="component" value="Chromosome"/>
</dbReference>
<dbReference type="GO" id="GO:0009523">
    <property type="term" value="C:photosystem II"/>
    <property type="evidence" value="ECO:0007669"/>
    <property type="project" value="UniProtKB-KW"/>
</dbReference>
<dbReference type="GO" id="GO:0031676">
    <property type="term" value="C:plasma membrane-derived thylakoid membrane"/>
    <property type="evidence" value="ECO:0007669"/>
    <property type="project" value="UniProtKB-SubCell"/>
</dbReference>
<dbReference type="GO" id="GO:0015979">
    <property type="term" value="P:photosynthesis"/>
    <property type="evidence" value="ECO:0007669"/>
    <property type="project" value="UniProtKB-KW"/>
</dbReference>
<dbReference type="HAMAP" id="MF_01329">
    <property type="entry name" value="PSII_Psb30_Ycf12"/>
    <property type="match status" value="1"/>
</dbReference>
<dbReference type="InterPro" id="IPR010284">
    <property type="entry name" value="PSII_Ycf12_core-subunit"/>
</dbReference>
<dbReference type="NCBIfam" id="NF010239">
    <property type="entry name" value="PRK13686.1"/>
    <property type="match status" value="1"/>
</dbReference>
<dbReference type="Pfam" id="PF05969">
    <property type="entry name" value="PSII_Ycf12"/>
    <property type="match status" value="1"/>
</dbReference>
<organism>
    <name type="scientific">Microcystis aeruginosa (strain NIES-843 / IAM M-2473)</name>
    <dbReference type="NCBI Taxonomy" id="449447"/>
    <lineage>
        <taxon>Bacteria</taxon>
        <taxon>Bacillati</taxon>
        <taxon>Cyanobacteriota</taxon>
        <taxon>Cyanophyceae</taxon>
        <taxon>Oscillatoriophycideae</taxon>
        <taxon>Chroococcales</taxon>
        <taxon>Microcystaceae</taxon>
        <taxon>Microcystis</taxon>
    </lineage>
</organism>
<evidence type="ECO:0000255" key="1">
    <source>
        <dbReference type="HAMAP-Rule" id="MF_01329"/>
    </source>
</evidence>
<evidence type="ECO:0000305" key="2"/>
<comment type="function">
    <text evidence="1">A core subunit of photosystem II (PSII), probably helps stabilize the reaction center.</text>
</comment>
<comment type="subunit">
    <text evidence="1">PSII is composed of 1 copy each of membrane proteins PsbA, PsbB, PsbC, PsbD, PsbE, PsbF, PsbH, PsbI, PsbJ, PsbK, PsbL, PsbM, PsbT, PsbX, PsbY, PsbZ, Psb30/Ycf12, peripheral proteins PsbO, CyanoQ (PsbQ), PsbU, PsbV and a large number of cofactors. It forms dimeric complexes.</text>
</comment>
<comment type="subcellular location">
    <subcellularLocation>
        <location evidence="1">Cellular thylakoid membrane</location>
        <topology evidence="1">Single-pass membrane protein</topology>
    </subcellularLocation>
</comment>
<comment type="similarity">
    <text evidence="1">Belongs to the Psb30/Ycf12 family.</text>
</comment>
<comment type="sequence caution" evidence="2">
    <conflict type="erroneous initiation">
        <sequence resource="EMBL-CDS" id="BAG00080"/>
    </conflict>
    <text>Extended N-terminus.</text>
</comment>
<reference key="1">
    <citation type="journal article" date="2007" name="DNA Res.">
        <title>Complete genomic structure of the bloom-forming toxic cyanobacterium Microcystis aeruginosa NIES-843.</title>
        <authorList>
            <person name="Kaneko T."/>
            <person name="Nakajima N."/>
            <person name="Okamoto S."/>
            <person name="Suzuki I."/>
            <person name="Tanabe Y."/>
            <person name="Tamaoki M."/>
            <person name="Nakamura Y."/>
            <person name="Kasai F."/>
            <person name="Watanabe A."/>
            <person name="Kawashima K."/>
            <person name="Kishida Y."/>
            <person name="Ono A."/>
            <person name="Shimizu Y."/>
            <person name="Takahashi C."/>
            <person name="Minami C."/>
            <person name="Fujishiro T."/>
            <person name="Kohara M."/>
            <person name="Katoh M."/>
            <person name="Nakazaki N."/>
            <person name="Nakayama S."/>
            <person name="Yamada M."/>
            <person name="Tabata S."/>
            <person name="Watanabe M.M."/>
        </authorList>
    </citation>
    <scope>NUCLEOTIDE SEQUENCE [LARGE SCALE GENOMIC DNA]</scope>
    <source>
        <strain>NIES-843 / IAM M-247</strain>
    </source>
</reference>
<accession>B0JM63</accession>
<feature type="chain" id="PRO_0000342345" description="Photosystem II reaction center protein Psb30">
    <location>
        <begin position="1"/>
        <end position="39"/>
    </location>
</feature>
<feature type="transmembrane region" description="Helical" evidence="1">
    <location>
        <begin position="12"/>
        <end position="32"/>
    </location>
</feature>
<gene>
    <name evidence="1" type="primary">psb30</name>
    <name evidence="1" type="synonym">ycf12</name>
    <name type="ordered locus">MAE_02580</name>
</gene>
<proteinExistence type="inferred from homology"/>
<name>PSB30_MICAN</name>
<keyword id="KW-0472">Membrane</keyword>
<keyword id="KW-0602">Photosynthesis</keyword>
<keyword id="KW-0604">Photosystem II</keyword>
<keyword id="KW-0793">Thylakoid</keyword>
<keyword id="KW-0812">Transmembrane</keyword>
<keyword id="KW-1133">Transmembrane helix</keyword>